<feature type="chain" id="PRO_0000347273" description="Tumor protein p63-regulated gene 1-like protein">
    <location>
        <begin position="1"/>
        <end position="266"/>
    </location>
</feature>
<feature type="domain" description="hSac2" evidence="4">
    <location>
        <begin position="59"/>
        <end position="239"/>
    </location>
</feature>
<feature type="region of interest" description="Disordered" evidence="5">
    <location>
        <begin position="1"/>
        <end position="35"/>
    </location>
</feature>
<feature type="region of interest" description="Important for homomultimer formation and localization to presynaptic regions" evidence="7">
    <location>
        <begin position="52"/>
        <end position="91"/>
    </location>
</feature>
<feature type="region of interest" description="Important for homomultimer formation" evidence="7">
    <location>
        <begin position="180"/>
        <end position="266"/>
    </location>
</feature>
<feature type="modified residue" description="Phosphoserine" evidence="2">
    <location>
        <position position="10"/>
    </location>
</feature>
<feature type="modified residue" description="Phosphoserine" evidence="16">
    <location>
        <position position="14"/>
    </location>
</feature>
<feature type="modified residue" description="Phosphothreonine" evidence="1">
    <location>
        <position position="34"/>
    </location>
</feature>
<evidence type="ECO:0000250" key="1">
    <source>
        <dbReference type="UniProtKB" id="Q5T0D9"/>
    </source>
</evidence>
<evidence type="ECO:0000250" key="2">
    <source>
        <dbReference type="UniProtKB" id="Q9DBS2"/>
    </source>
</evidence>
<evidence type="ECO:0000255" key="3"/>
<evidence type="ECO:0000255" key="4">
    <source>
        <dbReference type="PROSITE-ProRule" id="PRU01127"/>
    </source>
</evidence>
<evidence type="ECO:0000256" key="5">
    <source>
        <dbReference type="SAM" id="MobiDB-lite"/>
    </source>
</evidence>
<evidence type="ECO:0000269" key="6">
    <source>
    </source>
</evidence>
<evidence type="ECO:0000269" key="7">
    <source>
    </source>
</evidence>
<evidence type="ECO:0000269" key="8">
    <source>
    </source>
</evidence>
<evidence type="ECO:0000303" key="9">
    <source>
    </source>
</evidence>
<evidence type="ECO:0000303" key="10">
    <source>
    </source>
</evidence>
<evidence type="ECO:0000303" key="11">
    <source>
    </source>
</evidence>
<evidence type="ECO:0000305" key="12"/>
<evidence type="ECO:0000312" key="13">
    <source>
        <dbReference type="EMBL" id="AAI60865.1"/>
    </source>
</evidence>
<evidence type="ECO:0000312" key="14">
    <source>
        <dbReference type="EMBL" id="ABW83994.1"/>
    </source>
</evidence>
<evidence type="ECO:0000312" key="15">
    <source>
        <dbReference type="RGD" id="1590079"/>
    </source>
</evidence>
<evidence type="ECO:0007744" key="16">
    <source>
    </source>
</evidence>
<gene>
    <name evidence="15" type="primary">Tprg1l</name>
    <name evidence="9 10 11" type="synonym">Mover</name>
</gene>
<keyword id="KW-0966">Cell projection</keyword>
<keyword id="KW-0968">Cytoplasmic vesicle</keyword>
<keyword id="KW-0472">Membrane</keyword>
<keyword id="KW-0597">Phosphoprotein</keyword>
<keyword id="KW-1185">Reference proteome</keyword>
<keyword id="KW-0770">Synapse</keyword>
<reference evidence="12 14" key="1">
    <citation type="journal article" date="2007" name="FEBS Lett.">
        <title>Mover is a novel vertebrate-specific presynaptic protein with differential distribution at subsets of CNS synapses.</title>
        <authorList>
            <person name="Kremer T."/>
            <person name="Kempf C."/>
            <person name="Wittenmayer N."/>
            <person name="Nawrotzki R."/>
            <person name="Kuner T."/>
            <person name="Kirsch J."/>
            <person name="Dresbach T."/>
        </authorList>
    </citation>
    <scope>NUCLEOTIDE SEQUENCE [MRNA]</scope>
    <scope>SUBCELLULAR LOCATION</scope>
    <scope>TISSUE SPECIFICITY</scope>
    <source>
        <strain evidence="14">Wistar</strain>
        <tissue evidence="14">Hippocampus</tissue>
    </source>
</reference>
<reference evidence="13" key="2">
    <citation type="journal article" date="2004" name="Genome Res.">
        <title>The status, quality, and expansion of the NIH full-length cDNA project: the Mammalian Gene Collection (MGC).</title>
        <authorList>
            <consortium name="The MGC Project Team"/>
        </authorList>
    </citation>
    <scope>NUCLEOTIDE SEQUENCE [LARGE SCALE MRNA]</scope>
    <source>
        <tissue evidence="13">Liver</tissue>
    </source>
</reference>
<reference key="3">
    <citation type="journal article" date="2012" name="Nat. Commun.">
        <title>Quantitative maps of protein phosphorylation sites across 14 different rat organs and tissues.</title>
        <authorList>
            <person name="Lundby A."/>
            <person name="Secher A."/>
            <person name="Lage K."/>
            <person name="Nordsborg N.B."/>
            <person name="Dmytriyev A."/>
            <person name="Lundby C."/>
            <person name="Olsen J.V."/>
        </authorList>
    </citation>
    <scope>PHOSPHORYLATION [LARGE SCALE ANALYSIS] AT SER-14</scope>
    <scope>IDENTIFICATION BY MASS SPECTROMETRY [LARGE SCALE ANALYSIS]</scope>
</reference>
<reference key="4">
    <citation type="journal article" date="2013" name="PLoS ONE">
        <title>Mover is a homomeric phospho-protein present on synaptic vesicles.</title>
        <authorList>
            <person name="Ahmed S."/>
            <person name="Wittenmayer N."/>
            <person name="Kremer T."/>
            <person name="Hoeber J."/>
            <person name="Kiran Akula A."/>
            <person name="Urlaub H."/>
            <person name="Islinger M."/>
            <person name="Kirsch J."/>
            <person name="Dean C."/>
            <person name="Dresbach T."/>
        </authorList>
    </citation>
    <scope>SUBUNIT</scope>
    <scope>SUBCELLULAR LOCATION</scope>
    <scope>PHOSPHORYLATION</scope>
    <scope>IDENTIFICATION BY MASS SPECTROMETRY</scope>
</reference>
<reference key="5">
    <citation type="journal article" date="2015" name="Neuron">
        <title>Modulation of Presynaptic Release Probability by the Vertebrate-Specific Protein Mover.</title>
        <authorList>
            <person name="Koerber C."/>
            <person name="Horstmann H."/>
            <person name="Venkataramani V."/>
            <person name="Herrmannsdoerfer F."/>
            <person name="Kremer T."/>
            <person name="Kaiser M."/>
            <person name="Schwenger D.B."/>
            <person name="Ahmed S."/>
            <person name="Dean C."/>
            <person name="Dresbach T."/>
            <person name="Kuner T."/>
        </authorList>
    </citation>
    <scope>FUNCTION</scope>
    <scope>TISSUE SPECIFICITY</scope>
</reference>
<dbReference type="EMBL" id="EU220430">
    <property type="protein sequence ID" value="ABW83994.1"/>
    <property type="molecule type" value="mRNA"/>
</dbReference>
<dbReference type="EMBL" id="BC160865">
    <property type="protein sequence ID" value="AAI60865.1"/>
    <property type="molecule type" value="mRNA"/>
</dbReference>
<dbReference type="RefSeq" id="NP_001103788.1">
    <property type="nucleotide sequence ID" value="NM_001110318.2"/>
</dbReference>
<dbReference type="RefSeq" id="NP_001258014.1">
    <property type="nucleotide sequence ID" value="NM_001271085.1"/>
</dbReference>
<dbReference type="FunCoup" id="A8WCF8">
    <property type="interactions" value="1133"/>
</dbReference>
<dbReference type="STRING" id="10116.ENSRNOP00000064778"/>
<dbReference type="iPTMnet" id="A8WCF8"/>
<dbReference type="PhosphoSitePlus" id="A8WCF8"/>
<dbReference type="jPOST" id="A8WCF8"/>
<dbReference type="PaxDb" id="10116-ENSRNOP00000064778"/>
<dbReference type="PeptideAtlas" id="A8WCF8"/>
<dbReference type="GeneID" id="687090"/>
<dbReference type="KEGG" id="rno:687090"/>
<dbReference type="AGR" id="RGD:1590079"/>
<dbReference type="CTD" id="127262"/>
<dbReference type="RGD" id="1590079">
    <property type="gene designation" value="Tprg1l"/>
</dbReference>
<dbReference type="VEuPathDB" id="HostDB:ENSRNOG00000046227"/>
<dbReference type="eggNOG" id="ENOG502QTYQ">
    <property type="taxonomic scope" value="Eukaryota"/>
</dbReference>
<dbReference type="HOGENOM" id="CLU_066718_1_0_1"/>
<dbReference type="InParanoid" id="A8WCF8"/>
<dbReference type="OrthoDB" id="34309at9989"/>
<dbReference type="PhylomeDB" id="A8WCF8"/>
<dbReference type="PRO" id="PR:A8WCF8"/>
<dbReference type="Proteomes" id="UP000002494">
    <property type="component" value="Chromosome 5"/>
</dbReference>
<dbReference type="Bgee" id="ENSRNOG00000046227">
    <property type="expression patterns" value="Expressed in frontal cortex and 19 other cell types or tissues"/>
</dbReference>
<dbReference type="ExpressionAtlas" id="A8WCF8">
    <property type="expression patterns" value="baseline and differential"/>
</dbReference>
<dbReference type="GO" id="GO:0044305">
    <property type="term" value="C:calyx of Held"/>
    <property type="evidence" value="ECO:0000314"/>
    <property type="project" value="UniProtKB"/>
</dbReference>
<dbReference type="GO" id="GO:0005737">
    <property type="term" value="C:cytoplasm"/>
    <property type="evidence" value="ECO:0000318"/>
    <property type="project" value="GO_Central"/>
</dbReference>
<dbReference type="GO" id="GO:0098850">
    <property type="term" value="C:extrinsic component of synaptic vesicle membrane"/>
    <property type="evidence" value="ECO:0000314"/>
    <property type="project" value="SynGO"/>
</dbReference>
<dbReference type="GO" id="GO:0098978">
    <property type="term" value="C:glutamatergic synapse"/>
    <property type="evidence" value="ECO:0000314"/>
    <property type="project" value="SynGO"/>
</dbReference>
<dbReference type="GO" id="GO:0098793">
    <property type="term" value="C:presynapse"/>
    <property type="evidence" value="ECO:0000266"/>
    <property type="project" value="RGD"/>
</dbReference>
<dbReference type="GO" id="GO:0048786">
    <property type="term" value="C:presynaptic active zone"/>
    <property type="evidence" value="ECO:0007669"/>
    <property type="project" value="UniProtKB-SubCell"/>
</dbReference>
<dbReference type="GO" id="GO:0008021">
    <property type="term" value="C:synaptic vesicle"/>
    <property type="evidence" value="ECO:0000314"/>
    <property type="project" value="UniProtKB"/>
</dbReference>
<dbReference type="GO" id="GO:0005516">
    <property type="term" value="F:calmodulin binding"/>
    <property type="evidence" value="ECO:0000266"/>
    <property type="project" value="RGD"/>
</dbReference>
<dbReference type="GO" id="GO:0042802">
    <property type="term" value="F:identical protein binding"/>
    <property type="evidence" value="ECO:0000266"/>
    <property type="project" value="RGD"/>
</dbReference>
<dbReference type="GO" id="GO:0033173">
    <property type="term" value="P:calcineurin-NFAT signaling cascade"/>
    <property type="evidence" value="ECO:0000266"/>
    <property type="project" value="RGD"/>
</dbReference>
<dbReference type="GO" id="GO:0050805">
    <property type="term" value="P:negative regulation of synaptic transmission"/>
    <property type="evidence" value="ECO:0000266"/>
    <property type="project" value="RGD"/>
</dbReference>
<dbReference type="GO" id="GO:0099171">
    <property type="term" value="P:presynaptic modulation of chemical synaptic transmission"/>
    <property type="evidence" value="ECO:0000314"/>
    <property type="project" value="SynGO"/>
</dbReference>
<dbReference type="GO" id="GO:0051966">
    <property type="term" value="P:regulation of synaptic transmission, glutamatergic"/>
    <property type="evidence" value="ECO:0000315"/>
    <property type="project" value="UniProtKB"/>
</dbReference>
<dbReference type="GO" id="GO:2000300">
    <property type="term" value="P:regulation of synaptic vesicle exocytosis"/>
    <property type="evidence" value="ECO:0000314"/>
    <property type="project" value="SynGO"/>
</dbReference>
<dbReference type="GO" id="GO:0016081">
    <property type="term" value="P:synaptic vesicle docking"/>
    <property type="evidence" value="ECO:0000266"/>
    <property type="project" value="RGD"/>
</dbReference>
<dbReference type="InterPro" id="IPR034753">
    <property type="entry name" value="hSac2"/>
</dbReference>
<dbReference type="InterPro" id="IPR022158">
    <property type="entry name" value="Inositol_phosphatase"/>
</dbReference>
<dbReference type="InterPro" id="IPR040242">
    <property type="entry name" value="TPRG1-like"/>
</dbReference>
<dbReference type="PANTHER" id="PTHR31108">
    <property type="entry name" value="TUMOR PROTEIN P63-REGULATED GENE 1-LIKE PROTEIN"/>
    <property type="match status" value="1"/>
</dbReference>
<dbReference type="PANTHER" id="PTHR31108:SF7">
    <property type="entry name" value="TUMOR PROTEIN P63-REGULATED GENE 1-LIKE PROTEIN"/>
    <property type="match status" value="1"/>
</dbReference>
<dbReference type="Pfam" id="PF12456">
    <property type="entry name" value="hSac2"/>
    <property type="match status" value="1"/>
</dbReference>
<dbReference type="PROSITE" id="PS51791">
    <property type="entry name" value="HSAC2"/>
    <property type="match status" value="1"/>
</dbReference>
<sequence>MLQLRDTVDSAGTSPTAVLAAGEDAGAGRQGAGTPLRQTLWPLNVHDPTRRARVKEYFVFRPGTIEQAVEEIRAVVRPVEDGEIQGVWLLTEVDHWNNEKERLVLVTDQSLLICKYDFISLQCQQVVRVALSAVDTISCGEFQFPPKSLNKREGFGVRIQWDKQSRPSFINRWNPWSTNMPYATFIEHPMAGMDEKTASLCHLESFKALLIQAVKKAQKESPLPGQANNVLVLDRPLLIETYVGLMSFINNEAKLGYSMTRGKIGF</sequence>
<protein>
    <recommendedName>
        <fullName evidence="1">Tumor protein p63-regulated gene 1-like protein</fullName>
    </recommendedName>
    <alternativeName>
        <fullName evidence="14">Mossy fiber terminal-associated vertebrate-specific presynaptic protein</fullName>
    </alternativeName>
</protein>
<accession>A8WCF8</accession>
<proteinExistence type="evidence at protein level"/>
<name>TPRGL_RAT</name>
<organism>
    <name type="scientific">Rattus norvegicus</name>
    <name type="common">Rat</name>
    <dbReference type="NCBI Taxonomy" id="10116"/>
    <lineage>
        <taxon>Eukaryota</taxon>
        <taxon>Metazoa</taxon>
        <taxon>Chordata</taxon>
        <taxon>Craniata</taxon>
        <taxon>Vertebrata</taxon>
        <taxon>Euteleostomi</taxon>
        <taxon>Mammalia</taxon>
        <taxon>Eutheria</taxon>
        <taxon>Euarchontoglires</taxon>
        <taxon>Glires</taxon>
        <taxon>Rodentia</taxon>
        <taxon>Myomorpha</taxon>
        <taxon>Muroidea</taxon>
        <taxon>Muridae</taxon>
        <taxon>Murinae</taxon>
        <taxon>Rattus</taxon>
    </lineage>
</organism>
<comment type="function">
    <text evidence="8">Presynaptic protein involved in the synaptic transmission tuning. Regulates synaptic release probability by decreasing the calcium sensitivity of release.</text>
</comment>
<comment type="subunit">
    <text evidence="2 7">Forms homomultimers (PubMed:23723986). Multimerization appears to be important for presynaptic targeting (PubMed:23723986). Interacts with BSN (By similarity).</text>
</comment>
<comment type="subcellular location">
    <subcellularLocation>
        <location evidence="6 7 8">Cytoplasmic vesicle</location>
        <location evidence="6 7 8">Secretory vesicle</location>
        <location evidence="6 7 8">Synaptic vesicle membrane</location>
        <topology evidence="7 8">Peripheral membrane protein</topology>
    </subcellularLocation>
    <subcellularLocation>
        <location evidence="6 8">Presynaptic active zone</location>
    </subcellularLocation>
</comment>
<comment type="tissue specificity">
    <text evidence="6 8">Highest levels in brain with lower levels in testis. Weakly expressed in heart, spleen and liver. In the hippocampal CA3 region, localizes to mossy fiber terminals but is absent from inhibitory nerve terminals. Localizes to inhibitory terminals throughout the cerebellar cortex (at protein level) (PubMed:17869247). Expressed in the calyx of Held (PubMed:26212709).</text>
</comment>
<comment type="PTM">
    <text evidence="7">Phosphorylated. Phosphorylation promotes association with synaptic vesicle membranes.</text>
</comment>
<comment type="similarity">
    <text evidence="3">Belongs to the TPRG1 family.</text>
</comment>